<proteinExistence type="inferred from homology"/>
<comment type="catalytic activity">
    <reaction evidence="1">
        <text>Hydrolysis of terminal non-reducing beta-D-galactose residues in beta-D-galactosides.</text>
        <dbReference type="EC" id="3.2.1.23"/>
    </reaction>
</comment>
<comment type="cofactor">
    <cofactor evidence="1">
        <name>Mg(2+)</name>
        <dbReference type="ChEBI" id="CHEBI:18420"/>
    </cofactor>
    <text evidence="1">Binds 2 magnesium ions per monomer.</text>
</comment>
<comment type="cofactor">
    <cofactor evidence="1">
        <name>Na(+)</name>
        <dbReference type="ChEBI" id="CHEBI:29101"/>
    </cofactor>
    <text evidence="1">Binds 1 sodium ion per monomer.</text>
</comment>
<comment type="subunit">
    <text evidence="1">Homotetramer.</text>
</comment>
<comment type="similarity">
    <text evidence="1">Belongs to the glycosyl hydrolase 2 family.</text>
</comment>
<sequence>MQLSLPQILSRRDWENPQITQYHRLEAHPPFHSWRDVESAQKDRPSPQQQTLNGLWSFSYFTQPEAVPEHWVRCDLAEAKPLPVPANWQLHGYDAPIYTNIQYPIPVNPPRVPDLNPTGCYSRDFTLEPSWLASGKTRIIFDGVSSAFYLWCNGQWVGYSQDSRLPAEFDLTPYLQAGSNRIAVLVLRWSDGSYLEDQDMWRMSGIFRDVKLLHKPEIHLRDIHIMTHLSPEFTSANLEVMAAVNIPSLQLNDPQVTGSYQLRVQLWLADKLVASLQQPLGTQAIDERGPYTDRTQLVLRIDQPLLWSAEQPTLYRAVVSLLNHQQELIEAEAYDVGFRQVAIHQGLLKINGKAVLIRGVNRHEHHPQTGQAIDEESLLQDILLMKQHNFNAVRCSHYPNHPLWYRLCDRYGLYVVDEANIETHGMQPMSRLSDDPSWFSAFSERVTRMVQRDRNHPCIIIWSLGNESGHGATHDALYRWIKTNDPTRPVQYEGGGANTLATDILCPMYARVDEDQPFPAVPKWSIKKWIGLPNESRPLILCEYAHAMGNSFGGFARYWQAFRQYPRLQGGFIWDWVDQSLTHHNDHGQPYWAYGGDFGDTPNDRQFCMNGLVFPDRSPHPSLYEAQCAQQFFQFSLLSTTPLVINITSEYLFRESDNEQLYWRIMLEGESVLEGSQPLNLSPESSQCYRLAEKLPTLNKPGQLWLNVEIRQPKETPWSPAQHRSAWHQWRLPQPLFSPSSDLTNATAHYAPQLQHNLQLQHDLQLQQDEQHIKVTYQQQCWQFSRQTGRLAQWWVADKPMLLRPLQDQFVRAPLDNDIGISEATHIDPNAWVERWKKAGMYQLQQRCLSLHVDHLSHSVQISAEYGYEFEQEPLLHSHWVYRFDRHGRMTIDVNVRIATSLPAPARIGMCCQLADISPTVEWLGLGPHENYPDRQLAAQYGHWSLPLEQMHTAYIFPSENGLRCNTHTLNYGRWTLTGDFHFGISRYSTQQLMVTSHQHLLEPEEGTWLNIDGFHMGVGGDDSWSPSVHIDDILTRETYQYQICWQYKV</sequence>
<name>BGAL_YERPG</name>
<protein>
    <recommendedName>
        <fullName evidence="1">Beta-galactosidase</fullName>
        <shortName evidence="1">Beta-gal</shortName>
        <ecNumber evidence="1">3.2.1.23</ecNumber>
    </recommendedName>
    <alternativeName>
        <fullName evidence="1">Lactase</fullName>
    </alternativeName>
</protein>
<evidence type="ECO:0000255" key="1">
    <source>
        <dbReference type="HAMAP-Rule" id="MF_01687"/>
    </source>
</evidence>
<organism>
    <name type="scientific">Yersinia pestis bv. Antiqua (strain Angola)</name>
    <dbReference type="NCBI Taxonomy" id="349746"/>
    <lineage>
        <taxon>Bacteria</taxon>
        <taxon>Pseudomonadati</taxon>
        <taxon>Pseudomonadota</taxon>
        <taxon>Gammaproteobacteria</taxon>
        <taxon>Enterobacterales</taxon>
        <taxon>Yersiniaceae</taxon>
        <taxon>Yersinia</taxon>
    </lineage>
</organism>
<keyword id="KW-0326">Glycosidase</keyword>
<keyword id="KW-0378">Hydrolase</keyword>
<keyword id="KW-0460">Magnesium</keyword>
<keyword id="KW-0479">Metal-binding</keyword>
<keyword id="KW-0915">Sodium</keyword>
<gene>
    <name evidence="1" type="primary">lacZ</name>
    <name type="ordered locus">YpAngola_A2834</name>
</gene>
<feature type="chain" id="PRO_0000367017" description="Beta-galactosidase">
    <location>
        <begin position="1"/>
        <end position="1050"/>
    </location>
</feature>
<feature type="active site" description="Proton donor" evidence="1">
    <location>
        <position position="467"/>
    </location>
</feature>
<feature type="active site" description="Nucleophile" evidence="1">
    <location>
        <position position="543"/>
    </location>
</feature>
<feature type="binding site" evidence="1">
    <location>
        <position position="100"/>
    </location>
    <ligand>
        <name>substrate</name>
    </ligand>
</feature>
<feature type="binding site" evidence="1">
    <location>
        <position position="199"/>
    </location>
    <ligand>
        <name>Na(+)</name>
        <dbReference type="ChEBI" id="CHEBI:29101"/>
    </ligand>
</feature>
<feature type="binding site" evidence="1">
    <location>
        <position position="199"/>
    </location>
    <ligand>
        <name>substrate</name>
    </ligand>
</feature>
<feature type="binding site" evidence="1">
    <location>
        <position position="422"/>
    </location>
    <ligand>
        <name>Mg(2+)</name>
        <dbReference type="ChEBI" id="CHEBI:18420"/>
        <label>1</label>
    </ligand>
</feature>
<feature type="binding site" evidence="1">
    <location>
        <position position="424"/>
    </location>
    <ligand>
        <name>Mg(2+)</name>
        <dbReference type="ChEBI" id="CHEBI:18420"/>
        <label>1</label>
    </ligand>
</feature>
<feature type="binding site" evidence="1">
    <location>
        <position position="467"/>
    </location>
    <ligand>
        <name>Mg(2+)</name>
        <dbReference type="ChEBI" id="CHEBI:18420"/>
        <label>1</label>
    </ligand>
</feature>
<feature type="binding site" evidence="1">
    <location>
        <position position="467"/>
    </location>
    <ligand>
        <name>substrate</name>
    </ligand>
</feature>
<feature type="binding site" evidence="1">
    <location>
        <begin position="543"/>
        <end position="546"/>
    </location>
    <ligand>
        <name>substrate</name>
    </ligand>
</feature>
<feature type="binding site" evidence="1">
    <location>
        <position position="603"/>
    </location>
    <ligand>
        <name>Mg(2+)</name>
        <dbReference type="ChEBI" id="CHEBI:18420"/>
        <label>2</label>
    </ligand>
</feature>
<feature type="binding site" evidence="1">
    <location>
        <position position="607"/>
    </location>
    <ligand>
        <name>Na(+)</name>
        <dbReference type="ChEBI" id="CHEBI:29101"/>
    </ligand>
</feature>
<feature type="binding site" evidence="1">
    <location>
        <position position="610"/>
    </location>
    <ligand>
        <name>Na(+)</name>
        <dbReference type="ChEBI" id="CHEBI:29101"/>
    </ligand>
</feature>
<feature type="binding site" evidence="1">
    <location>
        <position position="610"/>
    </location>
    <ligand>
        <name>substrate</name>
    </ligand>
</feature>
<feature type="binding site" evidence="1">
    <location>
        <position position="1025"/>
    </location>
    <ligand>
        <name>substrate</name>
    </ligand>
</feature>
<feature type="site" description="Transition state stabilizer" evidence="1">
    <location>
        <position position="363"/>
    </location>
</feature>
<feature type="site" description="Transition state stabilizer" evidence="1">
    <location>
        <position position="397"/>
    </location>
</feature>
<dbReference type="EC" id="3.2.1.23" evidence="1"/>
<dbReference type="EMBL" id="CP000901">
    <property type="protein sequence ID" value="ABX87965.1"/>
    <property type="molecule type" value="Genomic_DNA"/>
</dbReference>
<dbReference type="SMR" id="A9R0J8"/>
<dbReference type="CAZy" id="GH2">
    <property type="family name" value="Glycoside Hydrolase Family 2"/>
</dbReference>
<dbReference type="KEGG" id="ypg:YpAngola_A2834"/>
<dbReference type="GO" id="GO:0009341">
    <property type="term" value="C:beta-galactosidase complex"/>
    <property type="evidence" value="ECO:0007669"/>
    <property type="project" value="InterPro"/>
</dbReference>
<dbReference type="GO" id="GO:0004565">
    <property type="term" value="F:beta-galactosidase activity"/>
    <property type="evidence" value="ECO:0007669"/>
    <property type="project" value="UniProtKB-EC"/>
</dbReference>
<dbReference type="GO" id="GO:0030246">
    <property type="term" value="F:carbohydrate binding"/>
    <property type="evidence" value="ECO:0007669"/>
    <property type="project" value="InterPro"/>
</dbReference>
<dbReference type="GO" id="GO:0000287">
    <property type="term" value="F:magnesium ion binding"/>
    <property type="evidence" value="ECO:0007669"/>
    <property type="project" value="UniProtKB-UniRule"/>
</dbReference>
<dbReference type="GO" id="GO:0005990">
    <property type="term" value="P:lactose catabolic process"/>
    <property type="evidence" value="ECO:0007669"/>
    <property type="project" value="TreeGrafter"/>
</dbReference>
<dbReference type="FunFam" id="2.60.120.260:FF:000058">
    <property type="entry name" value="Beta-galactosidase"/>
    <property type="match status" value="1"/>
</dbReference>
<dbReference type="FunFam" id="3.20.20.80:FF:000018">
    <property type="entry name" value="Beta-galactosidase"/>
    <property type="match status" value="1"/>
</dbReference>
<dbReference type="Gene3D" id="2.70.98.10">
    <property type="match status" value="1"/>
</dbReference>
<dbReference type="Gene3D" id="2.60.120.260">
    <property type="entry name" value="Galactose-binding domain-like"/>
    <property type="match status" value="1"/>
</dbReference>
<dbReference type="Gene3D" id="3.20.20.80">
    <property type="entry name" value="Glycosidases"/>
    <property type="match status" value="1"/>
</dbReference>
<dbReference type="Gene3D" id="2.60.40.10">
    <property type="entry name" value="Immunoglobulins"/>
    <property type="match status" value="2"/>
</dbReference>
<dbReference type="HAMAP" id="MF_01687">
    <property type="entry name" value="Beta_gal"/>
    <property type="match status" value="1"/>
</dbReference>
<dbReference type="InterPro" id="IPR004199">
    <property type="entry name" value="B-gal_small/dom_5"/>
</dbReference>
<dbReference type="InterPro" id="IPR050347">
    <property type="entry name" value="Bact_Beta-galactosidase"/>
</dbReference>
<dbReference type="InterPro" id="IPR036156">
    <property type="entry name" value="Beta-gal/glucu_dom_sf"/>
</dbReference>
<dbReference type="InterPro" id="IPR011013">
    <property type="entry name" value="Gal_mutarotase_sf_dom"/>
</dbReference>
<dbReference type="InterPro" id="IPR008979">
    <property type="entry name" value="Galactose-bd-like_sf"/>
</dbReference>
<dbReference type="InterPro" id="IPR014718">
    <property type="entry name" value="GH-type_carb-bd"/>
</dbReference>
<dbReference type="InterPro" id="IPR006101">
    <property type="entry name" value="Glyco_hydro_2"/>
</dbReference>
<dbReference type="InterPro" id="IPR023232">
    <property type="entry name" value="Glyco_hydro_2_AS"/>
</dbReference>
<dbReference type="InterPro" id="IPR023933">
    <property type="entry name" value="Glyco_hydro_2_beta_Galsidase"/>
</dbReference>
<dbReference type="InterPro" id="IPR006103">
    <property type="entry name" value="Glyco_hydro_2_cat"/>
</dbReference>
<dbReference type="InterPro" id="IPR023230">
    <property type="entry name" value="Glyco_hydro_2_CS"/>
</dbReference>
<dbReference type="InterPro" id="IPR006102">
    <property type="entry name" value="Glyco_hydro_2_Ig-like"/>
</dbReference>
<dbReference type="InterPro" id="IPR006104">
    <property type="entry name" value="Glyco_hydro_2_N"/>
</dbReference>
<dbReference type="InterPro" id="IPR017853">
    <property type="entry name" value="Glycoside_hydrolase_SF"/>
</dbReference>
<dbReference type="InterPro" id="IPR013783">
    <property type="entry name" value="Ig-like_fold"/>
</dbReference>
<dbReference type="InterPro" id="IPR032312">
    <property type="entry name" value="LacZ_4"/>
</dbReference>
<dbReference type="NCBIfam" id="NF007074">
    <property type="entry name" value="PRK09525.1"/>
    <property type="match status" value="1"/>
</dbReference>
<dbReference type="PANTHER" id="PTHR46323">
    <property type="entry name" value="BETA-GALACTOSIDASE"/>
    <property type="match status" value="1"/>
</dbReference>
<dbReference type="PANTHER" id="PTHR46323:SF2">
    <property type="entry name" value="BETA-GALACTOSIDASE"/>
    <property type="match status" value="1"/>
</dbReference>
<dbReference type="Pfam" id="PF02929">
    <property type="entry name" value="Bgal_small_N"/>
    <property type="match status" value="1"/>
</dbReference>
<dbReference type="Pfam" id="PF00703">
    <property type="entry name" value="Glyco_hydro_2"/>
    <property type="match status" value="1"/>
</dbReference>
<dbReference type="Pfam" id="PF02836">
    <property type="entry name" value="Glyco_hydro_2_C"/>
    <property type="match status" value="1"/>
</dbReference>
<dbReference type="Pfam" id="PF02837">
    <property type="entry name" value="Glyco_hydro_2_N"/>
    <property type="match status" value="1"/>
</dbReference>
<dbReference type="Pfam" id="PF16353">
    <property type="entry name" value="LacZ_4"/>
    <property type="match status" value="1"/>
</dbReference>
<dbReference type="PRINTS" id="PR00132">
    <property type="entry name" value="GLHYDRLASE2"/>
</dbReference>
<dbReference type="SMART" id="SM01038">
    <property type="entry name" value="Bgal_small_N"/>
    <property type="match status" value="1"/>
</dbReference>
<dbReference type="SUPFAM" id="SSF51445">
    <property type="entry name" value="(Trans)glycosidases"/>
    <property type="match status" value="1"/>
</dbReference>
<dbReference type="SUPFAM" id="SSF49303">
    <property type="entry name" value="beta-Galactosidase/glucuronidase domain"/>
    <property type="match status" value="2"/>
</dbReference>
<dbReference type="SUPFAM" id="SSF74650">
    <property type="entry name" value="Galactose mutarotase-like"/>
    <property type="match status" value="1"/>
</dbReference>
<dbReference type="SUPFAM" id="SSF49785">
    <property type="entry name" value="Galactose-binding domain-like"/>
    <property type="match status" value="1"/>
</dbReference>
<dbReference type="PROSITE" id="PS00719">
    <property type="entry name" value="GLYCOSYL_HYDROL_F2_1"/>
    <property type="match status" value="1"/>
</dbReference>
<dbReference type="PROSITE" id="PS00608">
    <property type="entry name" value="GLYCOSYL_HYDROL_F2_2"/>
    <property type="match status" value="1"/>
</dbReference>
<reference key="1">
    <citation type="journal article" date="2010" name="J. Bacteriol.">
        <title>Genome sequence of the deep-rooted Yersinia pestis strain Angola reveals new insights into the evolution and pangenome of the plague bacterium.</title>
        <authorList>
            <person name="Eppinger M."/>
            <person name="Worsham P.L."/>
            <person name="Nikolich M.P."/>
            <person name="Riley D.R."/>
            <person name="Sebastian Y."/>
            <person name="Mou S."/>
            <person name="Achtman M."/>
            <person name="Lindler L.E."/>
            <person name="Ravel J."/>
        </authorList>
    </citation>
    <scope>NUCLEOTIDE SEQUENCE [LARGE SCALE GENOMIC DNA]</scope>
    <source>
        <strain>Angola</strain>
    </source>
</reference>
<accession>A9R0J8</accession>